<reference key="1">
    <citation type="journal article" date="2007" name="Genome Res.">
        <title>Genome sequence of a proteolytic (Group I) Clostridium botulinum strain Hall A and comparative analysis of the clostridial genomes.</title>
        <authorList>
            <person name="Sebaihia M."/>
            <person name="Peck M.W."/>
            <person name="Minton N.P."/>
            <person name="Thomson N.R."/>
            <person name="Holden M.T.G."/>
            <person name="Mitchell W.J."/>
            <person name="Carter A.T."/>
            <person name="Bentley S.D."/>
            <person name="Mason D.R."/>
            <person name="Crossman L."/>
            <person name="Paul C.J."/>
            <person name="Ivens A."/>
            <person name="Wells-Bennik M.H.J."/>
            <person name="Davis I.J."/>
            <person name="Cerdeno-Tarraga A.M."/>
            <person name="Churcher C."/>
            <person name="Quail M.A."/>
            <person name="Chillingworth T."/>
            <person name="Feltwell T."/>
            <person name="Fraser A."/>
            <person name="Goodhead I."/>
            <person name="Hance Z."/>
            <person name="Jagels K."/>
            <person name="Larke N."/>
            <person name="Maddison M."/>
            <person name="Moule S."/>
            <person name="Mungall K."/>
            <person name="Norbertczak H."/>
            <person name="Rabbinowitsch E."/>
            <person name="Sanders M."/>
            <person name="Simmonds M."/>
            <person name="White B."/>
            <person name="Whithead S."/>
            <person name="Parkhill J."/>
        </authorList>
    </citation>
    <scope>NUCLEOTIDE SEQUENCE [LARGE SCALE GENOMIC DNA]</scope>
    <source>
        <strain>Hall / ATCC 3502 / NCTC 13319 / Type A</strain>
    </source>
</reference>
<reference key="2">
    <citation type="journal article" date="2007" name="PLoS ONE">
        <title>Analysis of the neurotoxin complex genes in Clostridium botulinum A1-A4 and B1 strains: BoNT/A3, /Ba4 and /B1 clusters are located within plasmids.</title>
        <authorList>
            <person name="Smith T.J."/>
            <person name="Hill K.K."/>
            <person name="Foley B.T."/>
            <person name="Detter J.C."/>
            <person name="Munk A.C."/>
            <person name="Bruce D.C."/>
            <person name="Doggett N.A."/>
            <person name="Smith L.A."/>
            <person name="Marks J.D."/>
            <person name="Xie G."/>
            <person name="Brettin T.S."/>
        </authorList>
    </citation>
    <scope>NUCLEOTIDE SEQUENCE [LARGE SCALE GENOMIC DNA]</scope>
    <source>
        <strain>Hall / ATCC 3502 / NCTC 13319 / Type A</strain>
    </source>
</reference>
<protein>
    <recommendedName>
        <fullName evidence="1">DNA ligase</fullName>
        <ecNumber evidence="1">6.5.1.2</ecNumber>
    </recommendedName>
    <alternativeName>
        <fullName evidence="1">Polydeoxyribonucleotide synthase [NAD(+)]</fullName>
    </alternativeName>
</protein>
<name>DNLJ_CLOBH</name>
<keyword id="KW-0227">DNA damage</keyword>
<keyword id="KW-0234">DNA repair</keyword>
<keyword id="KW-0235">DNA replication</keyword>
<keyword id="KW-0436">Ligase</keyword>
<keyword id="KW-0460">Magnesium</keyword>
<keyword id="KW-0464">Manganese</keyword>
<keyword id="KW-0479">Metal-binding</keyword>
<keyword id="KW-0520">NAD</keyword>
<keyword id="KW-1185">Reference proteome</keyword>
<keyword id="KW-0862">Zinc</keyword>
<comment type="function">
    <text evidence="1">DNA ligase that catalyzes the formation of phosphodiester linkages between 5'-phosphoryl and 3'-hydroxyl groups in double-stranded DNA using NAD as a coenzyme and as the energy source for the reaction. It is essential for DNA replication and repair of damaged DNA.</text>
</comment>
<comment type="catalytic activity">
    <reaction evidence="1">
        <text>NAD(+) + (deoxyribonucleotide)n-3'-hydroxyl + 5'-phospho-(deoxyribonucleotide)m = (deoxyribonucleotide)n+m + AMP + beta-nicotinamide D-nucleotide.</text>
        <dbReference type="EC" id="6.5.1.2"/>
    </reaction>
</comment>
<comment type="cofactor">
    <cofactor evidence="1">
        <name>Mg(2+)</name>
        <dbReference type="ChEBI" id="CHEBI:18420"/>
    </cofactor>
    <cofactor evidence="1">
        <name>Mn(2+)</name>
        <dbReference type="ChEBI" id="CHEBI:29035"/>
    </cofactor>
</comment>
<comment type="similarity">
    <text evidence="1">Belongs to the NAD-dependent DNA ligase family. LigA subfamily.</text>
</comment>
<feature type="chain" id="PRO_0000313195" description="DNA ligase">
    <location>
        <begin position="1"/>
        <end position="664"/>
    </location>
</feature>
<feature type="domain" description="BRCT" evidence="1">
    <location>
        <begin position="587"/>
        <end position="664"/>
    </location>
</feature>
<feature type="active site" description="N6-AMP-lysine intermediate" evidence="1">
    <location>
        <position position="122"/>
    </location>
</feature>
<feature type="binding site" evidence="1">
    <location>
        <begin position="32"/>
        <end position="36"/>
    </location>
    <ligand>
        <name>NAD(+)</name>
        <dbReference type="ChEBI" id="CHEBI:57540"/>
    </ligand>
</feature>
<feature type="binding site" evidence="1">
    <location>
        <begin position="80"/>
        <end position="81"/>
    </location>
    <ligand>
        <name>NAD(+)</name>
        <dbReference type="ChEBI" id="CHEBI:57540"/>
    </ligand>
</feature>
<feature type="binding site" evidence="1">
    <location>
        <position position="144"/>
    </location>
    <ligand>
        <name>NAD(+)</name>
        <dbReference type="ChEBI" id="CHEBI:57540"/>
    </ligand>
</feature>
<feature type="binding site" evidence="1">
    <location>
        <position position="178"/>
    </location>
    <ligand>
        <name>NAD(+)</name>
        <dbReference type="ChEBI" id="CHEBI:57540"/>
    </ligand>
</feature>
<feature type="binding site" evidence="1">
    <location>
        <position position="314"/>
    </location>
    <ligand>
        <name>NAD(+)</name>
        <dbReference type="ChEBI" id="CHEBI:57540"/>
    </ligand>
</feature>
<feature type="binding site" evidence="1">
    <location>
        <position position="407"/>
    </location>
    <ligand>
        <name>Zn(2+)</name>
        <dbReference type="ChEBI" id="CHEBI:29105"/>
    </ligand>
</feature>
<feature type="binding site" evidence="1">
    <location>
        <position position="410"/>
    </location>
    <ligand>
        <name>Zn(2+)</name>
        <dbReference type="ChEBI" id="CHEBI:29105"/>
    </ligand>
</feature>
<feature type="binding site" evidence="1">
    <location>
        <position position="423"/>
    </location>
    <ligand>
        <name>Zn(2+)</name>
        <dbReference type="ChEBI" id="CHEBI:29105"/>
    </ligand>
</feature>
<feature type="binding site" evidence="1">
    <location>
        <position position="429"/>
    </location>
    <ligand>
        <name>Zn(2+)</name>
        <dbReference type="ChEBI" id="CHEBI:29105"/>
    </ligand>
</feature>
<accession>A5I6Z7</accession>
<accession>A7G881</accession>
<gene>
    <name evidence="1" type="primary">ligA</name>
    <name type="ordered locus">CBO3270</name>
    <name type="ordered locus">CLC_3213</name>
</gene>
<organism>
    <name type="scientific">Clostridium botulinum (strain Hall / ATCC 3502 / NCTC 13319 / Type A)</name>
    <dbReference type="NCBI Taxonomy" id="441771"/>
    <lineage>
        <taxon>Bacteria</taxon>
        <taxon>Bacillati</taxon>
        <taxon>Bacillota</taxon>
        <taxon>Clostridia</taxon>
        <taxon>Eubacteriales</taxon>
        <taxon>Clostridiaceae</taxon>
        <taxon>Clostridium</taxon>
    </lineage>
</organism>
<evidence type="ECO:0000255" key="1">
    <source>
        <dbReference type="HAMAP-Rule" id="MF_01588"/>
    </source>
</evidence>
<sequence length="664" mass="75847">MDNKLEKMKELVEELNQYAYEYYVLDNPSISDKEYDLKYDELVILEKKTEVTLPYSPTQRVGDKILGEFSKYTHKGRLWSLDKAQNMEQLIEWHNRNLKVIEQYNSMSEDKLPELRYIVTKKFDGLTVNCTYDENGILIKSATRGTGIIGEDITAQIKTIKTVPLKIKNNHVIEVHGEAIMTKTAFEEYNKAAQVPLKNLRNGAAGALRNLDIKETARRNLSAFFYDVGYNEGPEFKSYREMMNFIKNMGLPQDKYIKECTNMEEVEKEIEYIESIRGELDYDIDGAVIVVDDIKTREILGYTIKFPKWAIAYKFEAKEITTKLLDVEWNVGRSGRVTPTALLEPVELGGVTVKRATLNNMDDIKRKNVKLGAKVLVRRSNDVIPEIMGVVEESLEESKEIQAPDRCPYCNSHLVQNGVHYYCENTLSCKPQMVKSIVHFASREAMNIAGFSEKTAEQLFEKLDIKSIADLYKIKKEELLTLEKFKDKKSQNLIDAIQNSKNCDLASFIYALGIPNVGKKTANDLVMKFKTLESIKNTTIEQLVEVPDVGEIVAKSIYDFFEDEKVISNIEELLNLGVKPYYEEERIDENPFMDKTIVVTGSLNNYSRGEIKDKLQSLGAKVSSSVSKNTDYVLVGEKPGSKYEKAIELGVKVINEEEFSNKIK</sequence>
<dbReference type="EC" id="6.5.1.2" evidence="1"/>
<dbReference type="EMBL" id="CP000727">
    <property type="protein sequence ID" value="ABS37253.1"/>
    <property type="molecule type" value="Genomic_DNA"/>
</dbReference>
<dbReference type="EMBL" id="AM412317">
    <property type="protein sequence ID" value="CAL84829.1"/>
    <property type="molecule type" value="Genomic_DNA"/>
</dbReference>
<dbReference type="RefSeq" id="WP_012048227.1">
    <property type="nucleotide sequence ID" value="NC_009698.1"/>
</dbReference>
<dbReference type="RefSeq" id="YP_001255756.1">
    <property type="nucleotide sequence ID" value="NC_009495.1"/>
</dbReference>
<dbReference type="RefSeq" id="YP_001388996.1">
    <property type="nucleotide sequence ID" value="NC_009698.1"/>
</dbReference>
<dbReference type="SMR" id="A5I6Z7"/>
<dbReference type="GeneID" id="5187299"/>
<dbReference type="KEGG" id="cbh:CLC_3213"/>
<dbReference type="KEGG" id="cbo:CBO3270"/>
<dbReference type="PATRIC" id="fig|413999.7.peg.3246"/>
<dbReference type="HOGENOM" id="CLU_007764_2_1_9"/>
<dbReference type="PRO" id="PR:A5I6Z7"/>
<dbReference type="Proteomes" id="UP000001986">
    <property type="component" value="Chromosome"/>
</dbReference>
<dbReference type="GO" id="GO:0005829">
    <property type="term" value="C:cytosol"/>
    <property type="evidence" value="ECO:0000318"/>
    <property type="project" value="GO_Central"/>
</dbReference>
<dbReference type="GO" id="GO:0003677">
    <property type="term" value="F:DNA binding"/>
    <property type="evidence" value="ECO:0007669"/>
    <property type="project" value="InterPro"/>
</dbReference>
<dbReference type="GO" id="GO:0003911">
    <property type="term" value="F:DNA ligase (NAD+) activity"/>
    <property type="evidence" value="ECO:0000318"/>
    <property type="project" value="GO_Central"/>
</dbReference>
<dbReference type="GO" id="GO:0046872">
    <property type="term" value="F:metal ion binding"/>
    <property type="evidence" value="ECO:0007669"/>
    <property type="project" value="UniProtKB-KW"/>
</dbReference>
<dbReference type="GO" id="GO:0006281">
    <property type="term" value="P:DNA repair"/>
    <property type="evidence" value="ECO:0007669"/>
    <property type="project" value="UniProtKB-KW"/>
</dbReference>
<dbReference type="GO" id="GO:0006260">
    <property type="term" value="P:DNA replication"/>
    <property type="evidence" value="ECO:0007669"/>
    <property type="project" value="UniProtKB-KW"/>
</dbReference>
<dbReference type="CDD" id="cd17748">
    <property type="entry name" value="BRCT_DNA_ligase_like"/>
    <property type="match status" value="1"/>
</dbReference>
<dbReference type="CDD" id="cd09897">
    <property type="entry name" value="H3TH_FEN1-XPG-like"/>
    <property type="match status" value="1"/>
</dbReference>
<dbReference type="CDD" id="cd00114">
    <property type="entry name" value="LIGANc"/>
    <property type="match status" value="1"/>
</dbReference>
<dbReference type="FunFam" id="1.10.150.20:FF:000006">
    <property type="entry name" value="DNA ligase"/>
    <property type="match status" value="1"/>
</dbReference>
<dbReference type="FunFam" id="1.10.150.20:FF:000007">
    <property type="entry name" value="DNA ligase"/>
    <property type="match status" value="1"/>
</dbReference>
<dbReference type="FunFam" id="2.40.50.140:FF:000012">
    <property type="entry name" value="DNA ligase"/>
    <property type="match status" value="1"/>
</dbReference>
<dbReference type="FunFam" id="3.30.470.30:FF:000030">
    <property type="entry name" value="DNA ligase"/>
    <property type="match status" value="1"/>
</dbReference>
<dbReference type="Gene3D" id="1.10.150.20">
    <property type="entry name" value="5' to 3' exonuclease, C-terminal subdomain"/>
    <property type="match status" value="2"/>
</dbReference>
<dbReference type="Gene3D" id="3.40.50.10190">
    <property type="entry name" value="BRCT domain"/>
    <property type="match status" value="1"/>
</dbReference>
<dbReference type="Gene3D" id="3.30.470.30">
    <property type="entry name" value="DNA ligase/mRNA capping enzyme"/>
    <property type="match status" value="1"/>
</dbReference>
<dbReference type="Gene3D" id="1.10.287.610">
    <property type="entry name" value="Helix hairpin bin"/>
    <property type="match status" value="1"/>
</dbReference>
<dbReference type="Gene3D" id="2.40.50.140">
    <property type="entry name" value="Nucleic acid-binding proteins"/>
    <property type="match status" value="1"/>
</dbReference>
<dbReference type="HAMAP" id="MF_01588">
    <property type="entry name" value="DNA_ligase_A"/>
    <property type="match status" value="1"/>
</dbReference>
<dbReference type="InterPro" id="IPR001357">
    <property type="entry name" value="BRCT_dom"/>
</dbReference>
<dbReference type="InterPro" id="IPR036420">
    <property type="entry name" value="BRCT_dom_sf"/>
</dbReference>
<dbReference type="InterPro" id="IPR041663">
    <property type="entry name" value="DisA/LigA_HHH"/>
</dbReference>
<dbReference type="InterPro" id="IPR001679">
    <property type="entry name" value="DNA_ligase"/>
</dbReference>
<dbReference type="InterPro" id="IPR033136">
    <property type="entry name" value="DNA_ligase_CS"/>
</dbReference>
<dbReference type="InterPro" id="IPR013839">
    <property type="entry name" value="DNAligase_adenylation"/>
</dbReference>
<dbReference type="InterPro" id="IPR013840">
    <property type="entry name" value="DNAligase_N"/>
</dbReference>
<dbReference type="InterPro" id="IPR003583">
    <property type="entry name" value="Hlx-hairpin-Hlx_DNA-bd_motif"/>
</dbReference>
<dbReference type="InterPro" id="IPR012340">
    <property type="entry name" value="NA-bd_OB-fold"/>
</dbReference>
<dbReference type="InterPro" id="IPR004150">
    <property type="entry name" value="NAD_DNA_ligase_OB"/>
</dbReference>
<dbReference type="InterPro" id="IPR010994">
    <property type="entry name" value="RuvA_2-like"/>
</dbReference>
<dbReference type="NCBIfam" id="TIGR00575">
    <property type="entry name" value="dnlj"/>
    <property type="match status" value="1"/>
</dbReference>
<dbReference type="NCBIfam" id="NF005932">
    <property type="entry name" value="PRK07956.1"/>
    <property type="match status" value="1"/>
</dbReference>
<dbReference type="PANTHER" id="PTHR23389">
    <property type="entry name" value="CHROMOSOME TRANSMISSION FIDELITY FACTOR 18"/>
    <property type="match status" value="1"/>
</dbReference>
<dbReference type="PANTHER" id="PTHR23389:SF9">
    <property type="entry name" value="DNA LIGASE"/>
    <property type="match status" value="1"/>
</dbReference>
<dbReference type="Pfam" id="PF00533">
    <property type="entry name" value="BRCT"/>
    <property type="match status" value="1"/>
</dbReference>
<dbReference type="Pfam" id="PF01653">
    <property type="entry name" value="DNA_ligase_aden"/>
    <property type="match status" value="1"/>
</dbReference>
<dbReference type="Pfam" id="PF03120">
    <property type="entry name" value="DNA_ligase_OB"/>
    <property type="match status" value="1"/>
</dbReference>
<dbReference type="Pfam" id="PF12826">
    <property type="entry name" value="HHH_2"/>
    <property type="match status" value="1"/>
</dbReference>
<dbReference type="Pfam" id="PF14520">
    <property type="entry name" value="HHH_5"/>
    <property type="match status" value="1"/>
</dbReference>
<dbReference type="PIRSF" id="PIRSF001604">
    <property type="entry name" value="LigA"/>
    <property type="match status" value="1"/>
</dbReference>
<dbReference type="SMART" id="SM00292">
    <property type="entry name" value="BRCT"/>
    <property type="match status" value="1"/>
</dbReference>
<dbReference type="SMART" id="SM00278">
    <property type="entry name" value="HhH1"/>
    <property type="match status" value="4"/>
</dbReference>
<dbReference type="SMART" id="SM00532">
    <property type="entry name" value="LIGANc"/>
    <property type="match status" value="1"/>
</dbReference>
<dbReference type="SUPFAM" id="SSF52113">
    <property type="entry name" value="BRCT domain"/>
    <property type="match status" value="1"/>
</dbReference>
<dbReference type="SUPFAM" id="SSF56091">
    <property type="entry name" value="DNA ligase/mRNA capping enzyme, catalytic domain"/>
    <property type="match status" value="1"/>
</dbReference>
<dbReference type="SUPFAM" id="SSF50249">
    <property type="entry name" value="Nucleic acid-binding proteins"/>
    <property type="match status" value="1"/>
</dbReference>
<dbReference type="SUPFAM" id="SSF47781">
    <property type="entry name" value="RuvA domain 2-like"/>
    <property type="match status" value="1"/>
</dbReference>
<dbReference type="PROSITE" id="PS50172">
    <property type="entry name" value="BRCT"/>
    <property type="match status" value="1"/>
</dbReference>
<dbReference type="PROSITE" id="PS01056">
    <property type="entry name" value="DNA_LIGASE_N2"/>
    <property type="match status" value="1"/>
</dbReference>
<proteinExistence type="inferred from homology"/>